<evidence type="ECO:0000255" key="1">
    <source>
        <dbReference type="PROSITE-ProRule" id="PRU00257"/>
    </source>
</evidence>
<evidence type="ECO:0000305" key="2"/>
<comment type="similarity">
    <text evidence="2">Belongs to the VapA/VapI family.</text>
</comment>
<feature type="chain" id="PRO_0000149742" description="Virulence-associated protein A">
    <location>
        <begin position="1"/>
        <end position="102"/>
    </location>
</feature>
<feature type="domain" description="HTH cro/C1-type" evidence="1">
    <location>
        <begin position="14"/>
        <end position="69"/>
    </location>
</feature>
<feature type="DNA-binding region" description="H-T-H motif" evidence="1">
    <location>
        <begin position="25"/>
        <end position="44"/>
    </location>
</feature>
<accession>Q57475</accession>
<reference key="1">
    <citation type="journal article" date="1992" name="Infect. Immun.">
        <title>Molecular characterization of a genomic region associated with virulence in Dichelobacter nodosus.</title>
        <authorList>
            <person name="Katz M.E."/>
            <person name="Rood J.I."/>
            <person name="Strugnell R.A."/>
        </authorList>
    </citation>
    <scope>NUCLEOTIDE SEQUENCE [GENOMIC DNA]</scope>
    <source>
        <strain>A198</strain>
    </source>
</reference>
<sequence length="102" mass="11266">MAKMKNPPHPGLMLKVMYLEPLGLNITETAEKLDMPRSALSEIVNAKRAISPEVAVKLEKAFPKHSASFWLRAQAGYALSRVNPHCADKVKPIKTSPLMESV</sequence>
<dbReference type="EMBL" id="L31763">
    <property type="protein sequence ID" value="AAB00943.1"/>
    <property type="molecule type" value="Genomic_DNA"/>
</dbReference>
<dbReference type="EMBL" id="L22308">
    <property type="protein sequence ID" value="AAA20207.1"/>
    <property type="molecule type" value="Unassigned_DNA"/>
</dbReference>
<dbReference type="EMBL" id="M74565">
    <property type="protein sequence ID" value="AAA23351.1"/>
    <property type="molecule type" value="Genomic_DNA"/>
</dbReference>
<dbReference type="PIR" id="D49205">
    <property type="entry name" value="D49205"/>
</dbReference>
<dbReference type="RefSeq" id="WP_012030621.1">
    <property type="nucleotide sequence ID" value="NZ_SRJB01000012.1"/>
</dbReference>
<dbReference type="SMR" id="Q57475"/>
<dbReference type="OMA" id="RVQPPIC"/>
<dbReference type="GO" id="GO:0003677">
    <property type="term" value="F:DNA binding"/>
    <property type="evidence" value="ECO:0007669"/>
    <property type="project" value="UniProtKB-KW"/>
</dbReference>
<dbReference type="CDD" id="cd00093">
    <property type="entry name" value="HTH_XRE"/>
    <property type="match status" value="1"/>
</dbReference>
<dbReference type="Gene3D" id="1.10.260.40">
    <property type="entry name" value="lambda repressor-like DNA-binding domains"/>
    <property type="match status" value="1"/>
</dbReference>
<dbReference type="InterPro" id="IPR001387">
    <property type="entry name" value="Cro/C1-type_HTH"/>
</dbReference>
<dbReference type="InterPro" id="IPR010982">
    <property type="entry name" value="Lambda_DNA-bd_dom_sf"/>
</dbReference>
<dbReference type="InterPro" id="IPR013430">
    <property type="entry name" value="Toxin_antidote_HigA"/>
</dbReference>
<dbReference type="NCBIfam" id="TIGR02607">
    <property type="entry name" value="antidote_HigA"/>
    <property type="match status" value="1"/>
</dbReference>
<dbReference type="PANTHER" id="PTHR36924">
    <property type="entry name" value="ANTITOXIN HIGA-1"/>
    <property type="match status" value="1"/>
</dbReference>
<dbReference type="PANTHER" id="PTHR36924:SF1">
    <property type="entry name" value="ANTITOXIN HIGA-1"/>
    <property type="match status" value="1"/>
</dbReference>
<dbReference type="Pfam" id="PF01381">
    <property type="entry name" value="HTH_3"/>
    <property type="match status" value="1"/>
</dbReference>
<dbReference type="SMART" id="SM00530">
    <property type="entry name" value="HTH_XRE"/>
    <property type="match status" value="1"/>
</dbReference>
<dbReference type="SUPFAM" id="SSF47413">
    <property type="entry name" value="lambda repressor-like DNA-binding domains"/>
    <property type="match status" value="1"/>
</dbReference>
<dbReference type="PROSITE" id="PS50943">
    <property type="entry name" value="HTH_CROC1"/>
    <property type="match status" value="1"/>
</dbReference>
<protein>
    <recommendedName>
        <fullName>Virulence-associated protein A</fullName>
    </recommendedName>
</protein>
<name>VAPA_DICNO</name>
<organism>
    <name type="scientific">Dichelobacter nodosus</name>
    <name type="common">Bacteroides nodosus</name>
    <dbReference type="NCBI Taxonomy" id="870"/>
    <lineage>
        <taxon>Bacteria</taxon>
        <taxon>Pseudomonadati</taxon>
        <taxon>Pseudomonadota</taxon>
        <taxon>Gammaproteobacteria</taxon>
        <taxon>Cardiobacteriales</taxon>
        <taxon>Cardiobacteriaceae</taxon>
        <taxon>Dichelobacter</taxon>
    </lineage>
</organism>
<proteinExistence type="inferred from homology"/>
<gene>
    <name type="primary">vapA</name>
</gene>
<keyword id="KW-0238">DNA-binding</keyword>
<keyword id="KW-0843">Virulence</keyword>